<gene>
    <name evidence="1" type="primary">era</name>
    <name type="ordered locus">E2348C_2843</name>
</gene>
<dbReference type="EMBL" id="FM180568">
    <property type="protein sequence ID" value="CAS10391.1"/>
    <property type="molecule type" value="Genomic_DNA"/>
</dbReference>
<dbReference type="RefSeq" id="WP_000020737.1">
    <property type="nucleotide sequence ID" value="NC_011601.1"/>
</dbReference>
<dbReference type="SMR" id="B7UH06"/>
<dbReference type="GeneID" id="93774525"/>
<dbReference type="KEGG" id="ecg:E2348C_2843"/>
<dbReference type="HOGENOM" id="CLU_038009_1_2_6"/>
<dbReference type="Proteomes" id="UP000008205">
    <property type="component" value="Chromosome"/>
</dbReference>
<dbReference type="GO" id="GO:0005829">
    <property type="term" value="C:cytosol"/>
    <property type="evidence" value="ECO:0007669"/>
    <property type="project" value="TreeGrafter"/>
</dbReference>
<dbReference type="GO" id="GO:0005886">
    <property type="term" value="C:plasma membrane"/>
    <property type="evidence" value="ECO:0007669"/>
    <property type="project" value="UniProtKB-SubCell"/>
</dbReference>
<dbReference type="GO" id="GO:0005525">
    <property type="term" value="F:GTP binding"/>
    <property type="evidence" value="ECO:0007669"/>
    <property type="project" value="UniProtKB-UniRule"/>
</dbReference>
<dbReference type="GO" id="GO:0003924">
    <property type="term" value="F:GTPase activity"/>
    <property type="evidence" value="ECO:0007669"/>
    <property type="project" value="UniProtKB-UniRule"/>
</dbReference>
<dbReference type="GO" id="GO:0043024">
    <property type="term" value="F:ribosomal small subunit binding"/>
    <property type="evidence" value="ECO:0007669"/>
    <property type="project" value="TreeGrafter"/>
</dbReference>
<dbReference type="GO" id="GO:0070181">
    <property type="term" value="F:small ribosomal subunit rRNA binding"/>
    <property type="evidence" value="ECO:0007669"/>
    <property type="project" value="UniProtKB-UniRule"/>
</dbReference>
<dbReference type="GO" id="GO:0000028">
    <property type="term" value="P:ribosomal small subunit assembly"/>
    <property type="evidence" value="ECO:0007669"/>
    <property type="project" value="TreeGrafter"/>
</dbReference>
<dbReference type="CDD" id="cd04163">
    <property type="entry name" value="Era"/>
    <property type="match status" value="1"/>
</dbReference>
<dbReference type="CDD" id="cd22534">
    <property type="entry name" value="KH-II_Era"/>
    <property type="match status" value="1"/>
</dbReference>
<dbReference type="FunFam" id="3.30.300.20:FF:000003">
    <property type="entry name" value="GTPase Era"/>
    <property type="match status" value="1"/>
</dbReference>
<dbReference type="FunFam" id="3.40.50.300:FF:000094">
    <property type="entry name" value="GTPase Era"/>
    <property type="match status" value="1"/>
</dbReference>
<dbReference type="Gene3D" id="3.30.300.20">
    <property type="match status" value="1"/>
</dbReference>
<dbReference type="Gene3D" id="3.40.50.300">
    <property type="entry name" value="P-loop containing nucleotide triphosphate hydrolases"/>
    <property type="match status" value="1"/>
</dbReference>
<dbReference type="HAMAP" id="MF_00367">
    <property type="entry name" value="GTPase_Era"/>
    <property type="match status" value="1"/>
</dbReference>
<dbReference type="InterPro" id="IPR030388">
    <property type="entry name" value="G_ERA_dom"/>
</dbReference>
<dbReference type="InterPro" id="IPR006073">
    <property type="entry name" value="GTP-bd"/>
</dbReference>
<dbReference type="InterPro" id="IPR005662">
    <property type="entry name" value="GTPase_Era-like"/>
</dbReference>
<dbReference type="InterPro" id="IPR015946">
    <property type="entry name" value="KH_dom-like_a/b"/>
</dbReference>
<dbReference type="InterPro" id="IPR004044">
    <property type="entry name" value="KH_dom_type_2"/>
</dbReference>
<dbReference type="InterPro" id="IPR009019">
    <property type="entry name" value="KH_sf_prok-type"/>
</dbReference>
<dbReference type="InterPro" id="IPR027417">
    <property type="entry name" value="P-loop_NTPase"/>
</dbReference>
<dbReference type="InterPro" id="IPR005225">
    <property type="entry name" value="Small_GTP-bd"/>
</dbReference>
<dbReference type="NCBIfam" id="TIGR00436">
    <property type="entry name" value="era"/>
    <property type="match status" value="1"/>
</dbReference>
<dbReference type="NCBIfam" id="NF000908">
    <property type="entry name" value="PRK00089.1"/>
    <property type="match status" value="1"/>
</dbReference>
<dbReference type="NCBIfam" id="TIGR00231">
    <property type="entry name" value="small_GTP"/>
    <property type="match status" value="1"/>
</dbReference>
<dbReference type="PANTHER" id="PTHR42698">
    <property type="entry name" value="GTPASE ERA"/>
    <property type="match status" value="1"/>
</dbReference>
<dbReference type="PANTHER" id="PTHR42698:SF1">
    <property type="entry name" value="GTPASE ERA, MITOCHONDRIAL"/>
    <property type="match status" value="1"/>
</dbReference>
<dbReference type="Pfam" id="PF07650">
    <property type="entry name" value="KH_2"/>
    <property type="match status" value="1"/>
</dbReference>
<dbReference type="Pfam" id="PF01926">
    <property type="entry name" value="MMR_HSR1"/>
    <property type="match status" value="1"/>
</dbReference>
<dbReference type="SUPFAM" id="SSF52540">
    <property type="entry name" value="P-loop containing nucleoside triphosphate hydrolases"/>
    <property type="match status" value="1"/>
</dbReference>
<dbReference type="SUPFAM" id="SSF54814">
    <property type="entry name" value="Prokaryotic type KH domain (KH-domain type II)"/>
    <property type="match status" value="1"/>
</dbReference>
<dbReference type="PROSITE" id="PS51713">
    <property type="entry name" value="G_ERA"/>
    <property type="match status" value="1"/>
</dbReference>
<dbReference type="PROSITE" id="PS50823">
    <property type="entry name" value="KH_TYPE_2"/>
    <property type="match status" value="1"/>
</dbReference>
<feature type="chain" id="PRO_1000133777" description="GTPase Era">
    <location>
        <begin position="1"/>
        <end position="301"/>
    </location>
</feature>
<feature type="domain" description="Era-type G" evidence="2">
    <location>
        <begin position="7"/>
        <end position="175"/>
    </location>
</feature>
<feature type="domain" description="KH type-2" evidence="1">
    <location>
        <begin position="206"/>
        <end position="283"/>
    </location>
</feature>
<feature type="region of interest" description="G1" evidence="2">
    <location>
        <begin position="15"/>
        <end position="22"/>
    </location>
</feature>
<feature type="region of interest" description="G2" evidence="2">
    <location>
        <begin position="41"/>
        <end position="45"/>
    </location>
</feature>
<feature type="region of interest" description="G3" evidence="2">
    <location>
        <begin position="62"/>
        <end position="65"/>
    </location>
</feature>
<feature type="region of interest" description="G4" evidence="2">
    <location>
        <begin position="124"/>
        <end position="127"/>
    </location>
</feature>
<feature type="region of interest" description="G5" evidence="2">
    <location>
        <begin position="154"/>
        <end position="156"/>
    </location>
</feature>
<feature type="binding site" evidence="1">
    <location>
        <begin position="15"/>
        <end position="22"/>
    </location>
    <ligand>
        <name>GTP</name>
        <dbReference type="ChEBI" id="CHEBI:37565"/>
    </ligand>
</feature>
<feature type="binding site" evidence="1">
    <location>
        <begin position="62"/>
        <end position="66"/>
    </location>
    <ligand>
        <name>GTP</name>
        <dbReference type="ChEBI" id="CHEBI:37565"/>
    </ligand>
</feature>
<feature type="binding site" evidence="1">
    <location>
        <begin position="124"/>
        <end position="127"/>
    </location>
    <ligand>
        <name>GTP</name>
        <dbReference type="ChEBI" id="CHEBI:37565"/>
    </ligand>
</feature>
<name>ERA_ECO27</name>
<proteinExistence type="inferred from homology"/>
<protein>
    <recommendedName>
        <fullName evidence="1">GTPase Era</fullName>
    </recommendedName>
</protein>
<keyword id="KW-0997">Cell inner membrane</keyword>
<keyword id="KW-1003">Cell membrane</keyword>
<keyword id="KW-0963">Cytoplasm</keyword>
<keyword id="KW-0342">GTP-binding</keyword>
<keyword id="KW-0472">Membrane</keyword>
<keyword id="KW-0547">Nucleotide-binding</keyword>
<keyword id="KW-1185">Reference proteome</keyword>
<keyword id="KW-0690">Ribosome biogenesis</keyword>
<keyword id="KW-0694">RNA-binding</keyword>
<keyword id="KW-0699">rRNA-binding</keyword>
<accession>B7UH06</accession>
<comment type="function">
    <text evidence="1">An essential GTPase that binds both GDP and GTP, with rapid nucleotide exchange. Plays a role in 16S rRNA processing and 30S ribosomal subunit biogenesis and possibly also in cell cycle regulation and energy metabolism.</text>
</comment>
<comment type="subunit">
    <text evidence="1">Monomer.</text>
</comment>
<comment type="subcellular location">
    <subcellularLocation>
        <location>Cytoplasm</location>
    </subcellularLocation>
    <subcellularLocation>
        <location evidence="1">Cell inner membrane</location>
        <topology evidence="1">Peripheral membrane protein</topology>
    </subcellularLocation>
</comment>
<comment type="similarity">
    <text evidence="1 2">Belongs to the TRAFAC class TrmE-Era-EngA-EngB-Septin-like GTPase superfamily. Era GTPase family.</text>
</comment>
<evidence type="ECO:0000255" key="1">
    <source>
        <dbReference type="HAMAP-Rule" id="MF_00367"/>
    </source>
</evidence>
<evidence type="ECO:0000255" key="2">
    <source>
        <dbReference type="PROSITE-ProRule" id="PRU01050"/>
    </source>
</evidence>
<reference key="1">
    <citation type="journal article" date="2009" name="J. Bacteriol.">
        <title>Complete genome sequence and comparative genome analysis of enteropathogenic Escherichia coli O127:H6 strain E2348/69.</title>
        <authorList>
            <person name="Iguchi A."/>
            <person name="Thomson N.R."/>
            <person name="Ogura Y."/>
            <person name="Saunders D."/>
            <person name="Ooka T."/>
            <person name="Henderson I.R."/>
            <person name="Harris D."/>
            <person name="Asadulghani M."/>
            <person name="Kurokawa K."/>
            <person name="Dean P."/>
            <person name="Kenny B."/>
            <person name="Quail M.A."/>
            <person name="Thurston S."/>
            <person name="Dougan G."/>
            <person name="Hayashi T."/>
            <person name="Parkhill J."/>
            <person name="Frankel G."/>
        </authorList>
    </citation>
    <scope>NUCLEOTIDE SEQUENCE [LARGE SCALE GENOMIC DNA]</scope>
    <source>
        <strain>E2348/69 / EPEC</strain>
    </source>
</reference>
<organism>
    <name type="scientific">Escherichia coli O127:H6 (strain E2348/69 / EPEC)</name>
    <dbReference type="NCBI Taxonomy" id="574521"/>
    <lineage>
        <taxon>Bacteria</taxon>
        <taxon>Pseudomonadati</taxon>
        <taxon>Pseudomonadota</taxon>
        <taxon>Gammaproteobacteria</taxon>
        <taxon>Enterobacterales</taxon>
        <taxon>Enterobacteriaceae</taxon>
        <taxon>Escherichia</taxon>
    </lineage>
</organism>
<sequence>MSIDKSYCGFIAIVGRPNVGKSTLLNKLLGQKISITSRKAQTTRHRIVGIHTEGAYQAIYVDTPGLHMEEKRAINRLMNKAASSSIGDVELVIFVVEGTRWTPDDEMVLNKLRDGKAPVILAVNKVDNVQEKADLLPHLQFLASQMNFLDIVPISAETGLNVDTIAAIVRKHLPEATHHFPEDYITDRSQRFMASEIIREKLMRFLGAELPYSVTVEIERFVSNERGGYDINGLILVEREGQKKMVIGNKGAKIKTIGIEARKDMQEMFEAPVHLELWVKVKSGWADDERALRSLGYVDDL</sequence>